<dbReference type="EC" id="1.8.1.9"/>
<dbReference type="EMBL" id="BA000017">
    <property type="protein sequence ID" value="BAB56926.1"/>
    <property type="molecule type" value="Genomic_DNA"/>
</dbReference>
<dbReference type="RefSeq" id="WP_000134963.1">
    <property type="nucleotide sequence ID" value="NC_002758.2"/>
</dbReference>
<dbReference type="SMR" id="P66010"/>
<dbReference type="DrugBank" id="DB00548">
    <property type="generic name" value="Azelaic acid"/>
</dbReference>
<dbReference type="KEGG" id="sav:SAV0764"/>
<dbReference type="HOGENOM" id="CLU_031864_5_1_9"/>
<dbReference type="PhylomeDB" id="P66010"/>
<dbReference type="Proteomes" id="UP000002481">
    <property type="component" value="Chromosome"/>
</dbReference>
<dbReference type="GO" id="GO:0005737">
    <property type="term" value="C:cytoplasm"/>
    <property type="evidence" value="ECO:0007669"/>
    <property type="project" value="UniProtKB-SubCell"/>
</dbReference>
<dbReference type="GO" id="GO:0004791">
    <property type="term" value="F:thioredoxin-disulfide reductase (NADPH) activity"/>
    <property type="evidence" value="ECO:0007669"/>
    <property type="project" value="UniProtKB-EC"/>
</dbReference>
<dbReference type="GO" id="GO:0019430">
    <property type="term" value="P:removal of superoxide radicals"/>
    <property type="evidence" value="ECO:0007669"/>
    <property type="project" value="InterPro"/>
</dbReference>
<dbReference type="Gene3D" id="3.50.50.60">
    <property type="entry name" value="FAD/NAD(P)-binding domain"/>
    <property type="match status" value="2"/>
</dbReference>
<dbReference type="InterPro" id="IPR036188">
    <property type="entry name" value="FAD/NAD-bd_sf"/>
</dbReference>
<dbReference type="InterPro" id="IPR023753">
    <property type="entry name" value="FAD/NAD-binding_dom"/>
</dbReference>
<dbReference type="InterPro" id="IPR050097">
    <property type="entry name" value="Ferredoxin-NADP_redctase_2"/>
</dbReference>
<dbReference type="InterPro" id="IPR008255">
    <property type="entry name" value="Pyr_nucl-diS_OxRdtase_2_AS"/>
</dbReference>
<dbReference type="InterPro" id="IPR005982">
    <property type="entry name" value="Thioredox_Rdtase"/>
</dbReference>
<dbReference type="NCBIfam" id="TIGR01292">
    <property type="entry name" value="TRX_reduct"/>
    <property type="match status" value="1"/>
</dbReference>
<dbReference type="PANTHER" id="PTHR48105">
    <property type="entry name" value="THIOREDOXIN REDUCTASE 1-RELATED-RELATED"/>
    <property type="match status" value="1"/>
</dbReference>
<dbReference type="Pfam" id="PF07992">
    <property type="entry name" value="Pyr_redox_2"/>
    <property type="match status" value="1"/>
</dbReference>
<dbReference type="PRINTS" id="PR00368">
    <property type="entry name" value="FADPNR"/>
</dbReference>
<dbReference type="PRINTS" id="PR00469">
    <property type="entry name" value="PNDRDTASEII"/>
</dbReference>
<dbReference type="SUPFAM" id="SSF51905">
    <property type="entry name" value="FAD/NAD(P)-binding domain"/>
    <property type="match status" value="1"/>
</dbReference>
<dbReference type="PROSITE" id="PS00573">
    <property type="entry name" value="PYRIDINE_REDOX_2"/>
    <property type="match status" value="1"/>
</dbReference>
<keyword id="KW-0963">Cytoplasm</keyword>
<keyword id="KW-1015">Disulfide bond</keyword>
<keyword id="KW-0274">FAD</keyword>
<keyword id="KW-0285">Flavoprotein</keyword>
<keyword id="KW-0521">NADP</keyword>
<keyword id="KW-0560">Oxidoreductase</keyword>
<keyword id="KW-0676">Redox-active center</keyword>
<feature type="chain" id="PRO_0000166745" description="Thioredoxin reductase">
    <location>
        <begin position="1"/>
        <end position="311"/>
    </location>
</feature>
<feature type="binding site" evidence="2">
    <location>
        <begin position="35"/>
        <end position="42"/>
    </location>
    <ligand>
        <name>FAD</name>
        <dbReference type="ChEBI" id="CHEBI:57692"/>
    </ligand>
</feature>
<feature type="binding site" evidence="2">
    <location>
        <begin position="277"/>
        <end position="286"/>
    </location>
    <ligand>
        <name>FAD</name>
        <dbReference type="ChEBI" id="CHEBI:57692"/>
    </ligand>
</feature>
<feature type="disulfide bond" description="Redox-active" evidence="2">
    <location>
        <begin position="134"/>
        <end position="137"/>
    </location>
</feature>
<proteinExistence type="inferred from homology"/>
<name>TRXB_STAAM</name>
<comment type="catalytic activity">
    <reaction>
        <text>[thioredoxin]-dithiol + NADP(+) = [thioredoxin]-disulfide + NADPH + H(+)</text>
        <dbReference type="Rhea" id="RHEA:20345"/>
        <dbReference type="Rhea" id="RHEA-COMP:10698"/>
        <dbReference type="Rhea" id="RHEA-COMP:10700"/>
        <dbReference type="ChEBI" id="CHEBI:15378"/>
        <dbReference type="ChEBI" id="CHEBI:29950"/>
        <dbReference type="ChEBI" id="CHEBI:50058"/>
        <dbReference type="ChEBI" id="CHEBI:57783"/>
        <dbReference type="ChEBI" id="CHEBI:58349"/>
        <dbReference type="EC" id="1.8.1.9"/>
    </reaction>
</comment>
<comment type="cofactor">
    <cofactor evidence="2">
        <name>FAD</name>
        <dbReference type="ChEBI" id="CHEBI:57692"/>
    </cofactor>
    <text evidence="2">Binds 1 FAD per subunit.</text>
</comment>
<comment type="subunit">
    <text evidence="2">Homodimer.</text>
</comment>
<comment type="subcellular location">
    <subcellularLocation>
        <location evidence="1">Cytoplasm</location>
    </subcellularLocation>
</comment>
<comment type="miscellaneous">
    <text>The active site is a redox-active disulfide bond.</text>
</comment>
<comment type="similarity">
    <text evidence="3">Belongs to the class-II pyridine nucleotide-disulfide oxidoreductase family.</text>
</comment>
<evidence type="ECO:0000250" key="1"/>
<evidence type="ECO:0000250" key="2">
    <source>
        <dbReference type="UniProtKB" id="P0A9P4"/>
    </source>
</evidence>
<evidence type="ECO:0000305" key="3"/>
<gene>
    <name type="primary">trxB</name>
    <name type="ordered locus">SAV0764</name>
</gene>
<sequence>MTEIDFDIAIIGAGPAGMTAAVYASRANLKTVMIERGIPGGQMANTEEVENFPGFEMITGPDLSTKMFEHAKKFGAVYQYGDIKSVEDKGEYKVINFGNKELTAKAVIIATGAEYKKIGVPGEQELGGRGVSYCAVCDGAFFKNKRLFVIGGGDSAVEEGTFLTKFADKVTIVHRRDELRAQRILQDRAFKNDKIDFIWSHTLKSINEKDGKVGSVTLTSTKDGSEETHEADGVFIYIGMKPLTAPFKDLGITNDVGYIVTKDDMTTSVPGIFAAGDVRDKGLRQIVTATGDGSIAAQSAAEYIEHLNDQA</sequence>
<accession>P66010</accession>
<accession>Q99VL2</accession>
<organism>
    <name type="scientific">Staphylococcus aureus (strain Mu50 / ATCC 700699)</name>
    <dbReference type="NCBI Taxonomy" id="158878"/>
    <lineage>
        <taxon>Bacteria</taxon>
        <taxon>Bacillati</taxon>
        <taxon>Bacillota</taxon>
        <taxon>Bacilli</taxon>
        <taxon>Bacillales</taxon>
        <taxon>Staphylococcaceae</taxon>
        <taxon>Staphylococcus</taxon>
    </lineage>
</organism>
<reference key="1">
    <citation type="journal article" date="2001" name="Lancet">
        <title>Whole genome sequencing of meticillin-resistant Staphylococcus aureus.</title>
        <authorList>
            <person name="Kuroda M."/>
            <person name="Ohta T."/>
            <person name="Uchiyama I."/>
            <person name="Baba T."/>
            <person name="Yuzawa H."/>
            <person name="Kobayashi I."/>
            <person name="Cui L."/>
            <person name="Oguchi A."/>
            <person name="Aoki K."/>
            <person name="Nagai Y."/>
            <person name="Lian J.-Q."/>
            <person name="Ito T."/>
            <person name="Kanamori M."/>
            <person name="Matsumaru H."/>
            <person name="Maruyama A."/>
            <person name="Murakami H."/>
            <person name="Hosoyama A."/>
            <person name="Mizutani-Ui Y."/>
            <person name="Takahashi N.K."/>
            <person name="Sawano T."/>
            <person name="Inoue R."/>
            <person name="Kaito C."/>
            <person name="Sekimizu K."/>
            <person name="Hirakawa H."/>
            <person name="Kuhara S."/>
            <person name="Goto S."/>
            <person name="Yabuzaki J."/>
            <person name="Kanehisa M."/>
            <person name="Yamashita A."/>
            <person name="Oshima K."/>
            <person name="Furuya K."/>
            <person name="Yoshino C."/>
            <person name="Shiba T."/>
            <person name="Hattori M."/>
            <person name="Ogasawara N."/>
            <person name="Hayashi H."/>
            <person name="Hiramatsu K."/>
        </authorList>
    </citation>
    <scope>NUCLEOTIDE SEQUENCE [LARGE SCALE GENOMIC DNA]</scope>
    <source>
        <strain>Mu50 / ATCC 700699</strain>
    </source>
</reference>
<protein>
    <recommendedName>
        <fullName>Thioredoxin reductase</fullName>
        <shortName>TRXR</shortName>
        <ecNumber>1.8.1.9</ecNumber>
    </recommendedName>
</protein>